<sequence>MDSRTGEFITVHQAENGVYIWEIANPLYFRIYKVEDPLYTRTRIYHVQIRFNHNLRRALHLHKAYLNFQVWTTSMTASGSIYLNRFRRLVNMYLDQLGVISINNVIRAVQFATNRTYVNYVLENHSIKFKFY</sequence>
<comment type="function">
    <text evidence="1">Increases viral DNA accumulation. Enhances infectivity and symptom expression (By similarity).</text>
</comment>
<comment type="subunit">
    <text evidence="1">Homooligomer. Interacts with the replication-associated protein (REP). Interacts with host proliferating cell nuclear antigen (PCNA). Interacts with host retinoblastoma-related protein 1 (RBR1), and may thereby deregulate the host cell cycle. Oligomerization and interaction with PCNA are necessary for optimal replication enhancement (By similarity).</text>
</comment>
<comment type="similarity">
    <text evidence="2">Belongs to the geminiviridae replication enhancer protein family.</text>
</comment>
<evidence type="ECO:0000250" key="1"/>
<evidence type="ECO:0000305" key="2"/>
<proteinExistence type="inferred from homology"/>
<organismHost>
    <name type="scientific">Abutilon</name>
    <dbReference type="NCBI Taxonomy" id="3630"/>
</organismHost>
<organismHost>
    <name type="scientific">Gossypium hirsutum</name>
    <name type="common">Upland cotton</name>
    <name type="synonym">Gossypium mexicanum</name>
    <dbReference type="NCBI Taxonomy" id="3635"/>
</organismHost>
<organismHost>
    <name type="scientific">Hibiscus</name>
    <dbReference type="NCBI Taxonomy" id="47605"/>
</organismHost>
<organismHost>
    <name type="scientific">Malva</name>
    <dbReference type="NCBI Taxonomy" id="96479"/>
</organismHost>
<organismHost>
    <name type="scientific">Phaseolus vulgaris</name>
    <name type="common">Kidney bean</name>
    <name type="synonym">French bean</name>
    <dbReference type="NCBI Taxonomy" id="3885"/>
</organismHost>
<organismHost>
    <name type="scientific">Sida</name>
    <dbReference type="NCBI Taxonomy" id="108335"/>
</organismHost>
<keyword id="KW-0945">Host-virus interaction</keyword>
<keyword id="KW-1185">Reference proteome</keyword>
<reference key="1">
    <citation type="journal article" date="1990" name="Virology">
        <title>The nucleotide sequence of abutilon mosaic virus reveals prokaryotic as well as eukaryotic features.</title>
        <authorList>
            <person name="Frischmuth T."/>
            <person name="Zimmat G."/>
            <person name="Jeske H."/>
        </authorList>
    </citation>
    <scope>NUCLEOTIDE SEQUENCE [GENOMIC DNA]</scope>
</reference>
<gene>
    <name type="ORF">AC3</name>
    <name type="ORF">AL3</name>
</gene>
<dbReference type="EMBL" id="X15983">
    <property type="protein sequence ID" value="CAA34113.1"/>
    <property type="molecule type" value="Genomic_DNA"/>
</dbReference>
<dbReference type="PIR" id="C36214">
    <property type="entry name" value="QQCVW3"/>
</dbReference>
<dbReference type="KEGG" id="vg:956373"/>
<dbReference type="Proteomes" id="UP000006885">
    <property type="component" value="Genome"/>
</dbReference>
<dbReference type="GO" id="GO:0016032">
    <property type="term" value="P:viral process"/>
    <property type="evidence" value="ECO:0007669"/>
    <property type="project" value="InterPro"/>
</dbReference>
<dbReference type="InterPro" id="IPR000657">
    <property type="entry name" value="Gemini_AL3"/>
</dbReference>
<dbReference type="Pfam" id="PF01407">
    <property type="entry name" value="Gemini_AL3"/>
    <property type="match status" value="1"/>
</dbReference>
<dbReference type="PRINTS" id="PR00231">
    <property type="entry name" value="GEMCOATAL3"/>
</dbReference>
<protein>
    <recommendedName>
        <fullName>Replication enhancer protein</fullName>
        <shortName>REn</shortName>
    </recommendedName>
    <alternativeName>
        <fullName>Protein AC3</fullName>
    </alternativeName>
    <alternativeName>
        <fullName>Protein AL3</fullName>
    </alternativeName>
</protein>
<feature type="chain" id="PRO_0000222236" description="Replication enhancer protein">
    <location>
        <begin position="1"/>
        <end position="132"/>
    </location>
</feature>
<name>REN_ABMVW</name>
<accession>P21943</accession>
<organism>
    <name type="scientific">Abutilon mosaic virus (isolate West India)</name>
    <name type="common">AbMV</name>
    <dbReference type="NCBI Taxonomy" id="10816"/>
    <lineage>
        <taxon>Viruses</taxon>
        <taxon>Monodnaviria</taxon>
        <taxon>Shotokuvirae</taxon>
        <taxon>Cressdnaviricota</taxon>
        <taxon>Repensiviricetes</taxon>
        <taxon>Geplafuvirales</taxon>
        <taxon>Geminiviridae</taxon>
        <taxon>Begomovirus</taxon>
        <taxon>Begomovirus bauri</taxon>
    </lineage>
</organism>